<keyword id="KW-0963">Cytoplasm</keyword>
<keyword id="KW-0489">Methyltransferase</keyword>
<keyword id="KW-1185">Reference proteome</keyword>
<keyword id="KW-0698">rRNA processing</keyword>
<keyword id="KW-0949">S-adenosyl-L-methionine</keyword>
<keyword id="KW-0808">Transferase</keyword>
<reference key="1">
    <citation type="submission" date="2007-10" db="EMBL/GenBank/DDBJ databases">
        <title>Complete sequence of Shewanella pealeana ATCC 700345.</title>
        <authorList>
            <consortium name="US DOE Joint Genome Institute"/>
            <person name="Copeland A."/>
            <person name="Lucas S."/>
            <person name="Lapidus A."/>
            <person name="Barry K."/>
            <person name="Glavina del Rio T."/>
            <person name="Dalin E."/>
            <person name="Tice H."/>
            <person name="Pitluck S."/>
            <person name="Chertkov O."/>
            <person name="Brettin T."/>
            <person name="Bruce D."/>
            <person name="Detter J.C."/>
            <person name="Han C."/>
            <person name="Schmutz J."/>
            <person name="Larimer F."/>
            <person name="Land M."/>
            <person name="Hauser L."/>
            <person name="Kyrpides N."/>
            <person name="Kim E."/>
            <person name="Zhao J.-S.Z."/>
            <person name="Manno D."/>
            <person name="Hawari J."/>
            <person name="Richardson P."/>
        </authorList>
    </citation>
    <scope>NUCLEOTIDE SEQUENCE [LARGE SCALE GENOMIC DNA]</scope>
    <source>
        <strain>ATCC 700345 / ANG-SQ1</strain>
    </source>
</reference>
<name>RSMG_SHEPA</name>
<evidence type="ECO:0000255" key="1">
    <source>
        <dbReference type="HAMAP-Rule" id="MF_00074"/>
    </source>
</evidence>
<gene>
    <name evidence="1" type="primary">rsmG</name>
    <name type="ordered locus">Spea_4250</name>
</gene>
<sequence length="207" mass="23386">MLSAQLNDYLAEVGLTATEQQKKQLVDFVGMLNKWNKAFNLTSVRDPEQMLIRHIMDSLVVSPHLKGSRFIDVGTGPGLPGIPLAILNPDKEFVLLDSLGKRIRFQKQVQFELGINNISSIESRVEAYQPKDLFDGVLSRAFASIQDMLHWCHHLPKADGCFYALKGQLSEEEMSQMPAGFVVTDTIELKVPKLDEQRHLLRVIKQD</sequence>
<organism>
    <name type="scientific">Shewanella pealeana (strain ATCC 700345 / ANG-SQ1)</name>
    <dbReference type="NCBI Taxonomy" id="398579"/>
    <lineage>
        <taxon>Bacteria</taxon>
        <taxon>Pseudomonadati</taxon>
        <taxon>Pseudomonadota</taxon>
        <taxon>Gammaproteobacteria</taxon>
        <taxon>Alteromonadales</taxon>
        <taxon>Shewanellaceae</taxon>
        <taxon>Shewanella</taxon>
    </lineage>
</organism>
<dbReference type="EC" id="2.1.1.170" evidence="1"/>
<dbReference type="EMBL" id="CP000851">
    <property type="protein sequence ID" value="ABV89560.1"/>
    <property type="molecule type" value="Genomic_DNA"/>
</dbReference>
<dbReference type="RefSeq" id="WP_012157437.1">
    <property type="nucleotide sequence ID" value="NC_009901.1"/>
</dbReference>
<dbReference type="SMR" id="A8HAH3"/>
<dbReference type="STRING" id="398579.Spea_4250"/>
<dbReference type="KEGG" id="spl:Spea_4250"/>
<dbReference type="eggNOG" id="COG0357">
    <property type="taxonomic scope" value="Bacteria"/>
</dbReference>
<dbReference type="HOGENOM" id="CLU_065341_2_0_6"/>
<dbReference type="OrthoDB" id="9808773at2"/>
<dbReference type="Proteomes" id="UP000002608">
    <property type="component" value="Chromosome"/>
</dbReference>
<dbReference type="GO" id="GO:0005829">
    <property type="term" value="C:cytosol"/>
    <property type="evidence" value="ECO:0007669"/>
    <property type="project" value="TreeGrafter"/>
</dbReference>
<dbReference type="GO" id="GO:0070043">
    <property type="term" value="F:rRNA (guanine-N7-)-methyltransferase activity"/>
    <property type="evidence" value="ECO:0007669"/>
    <property type="project" value="UniProtKB-UniRule"/>
</dbReference>
<dbReference type="CDD" id="cd02440">
    <property type="entry name" value="AdoMet_MTases"/>
    <property type="match status" value="1"/>
</dbReference>
<dbReference type="FunFam" id="3.40.50.150:FF:000032">
    <property type="entry name" value="Ribosomal RNA small subunit methyltransferase G"/>
    <property type="match status" value="1"/>
</dbReference>
<dbReference type="Gene3D" id="3.40.50.150">
    <property type="entry name" value="Vaccinia Virus protein VP39"/>
    <property type="match status" value="1"/>
</dbReference>
<dbReference type="HAMAP" id="MF_00074">
    <property type="entry name" value="16SrRNA_methyltr_G"/>
    <property type="match status" value="1"/>
</dbReference>
<dbReference type="InterPro" id="IPR003682">
    <property type="entry name" value="rRNA_ssu_MeTfrase_G"/>
</dbReference>
<dbReference type="InterPro" id="IPR029063">
    <property type="entry name" value="SAM-dependent_MTases_sf"/>
</dbReference>
<dbReference type="NCBIfam" id="TIGR00138">
    <property type="entry name" value="rsmG_gidB"/>
    <property type="match status" value="1"/>
</dbReference>
<dbReference type="PANTHER" id="PTHR31760">
    <property type="entry name" value="S-ADENOSYL-L-METHIONINE-DEPENDENT METHYLTRANSFERASES SUPERFAMILY PROTEIN"/>
    <property type="match status" value="1"/>
</dbReference>
<dbReference type="PANTHER" id="PTHR31760:SF0">
    <property type="entry name" value="S-ADENOSYL-L-METHIONINE-DEPENDENT METHYLTRANSFERASES SUPERFAMILY PROTEIN"/>
    <property type="match status" value="1"/>
</dbReference>
<dbReference type="Pfam" id="PF02527">
    <property type="entry name" value="GidB"/>
    <property type="match status" value="1"/>
</dbReference>
<dbReference type="PIRSF" id="PIRSF003078">
    <property type="entry name" value="GidB"/>
    <property type="match status" value="1"/>
</dbReference>
<dbReference type="SUPFAM" id="SSF53335">
    <property type="entry name" value="S-adenosyl-L-methionine-dependent methyltransferases"/>
    <property type="match status" value="1"/>
</dbReference>
<accession>A8HAH3</accession>
<proteinExistence type="inferred from homology"/>
<comment type="function">
    <text evidence="1">Specifically methylates the N7 position of guanine in position 527 of 16S rRNA.</text>
</comment>
<comment type="catalytic activity">
    <reaction evidence="1">
        <text>guanosine(527) in 16S rRNA + S-adenosyl-L-methionine = N(7)-methylguanosine(527) in 16S rRNA + S-adenosyl-L-homocysteine</text>
        <dbReference type="Rhea" id="RHEA:42732"/>
        <dbReference type="Rhea" id="RHEA-COMP:10209"/>
        <dbReference type="Rhea" id="RHEA-COMP:10210"/>
        <dbReference type="ChEBI" id="CHEBI:57856"/>
        <dbReference type="ChEBI" id="CHEBI:59789"/>
        <dbReference type="ChEBI" id="CHEBI:74269"/>
        <dbReference type="ChEBI" id="CHEBI:74480"/>
        <dbReference type="EC" id="2.1.1.170"/>
    </reaction>
</comment>
<comment type="subcellular location">
    <subcellularLocation>
        <location evidence="1">Cytoplasm</location>
    </subcellularLocation>
</comment>
<comment type="similarity">
    <text evidence="1">Belongs to the methyltransferase superfamily. RNA methyltransferase RsmG family.</text>
</comment>
<protein>
    <recommendedName>
        <fullName evidence="1">Ribosomal RNA small subunit methyltransferase G</fullName>
        <ecNumber evidence="1">2.1.1.170</ecNumber>
    </recommendedName>
    <alternativeName>
        <fullName evidence="1">16S rRNA 7-methylguanosine methyltransferase</fullName>
        <shortName evidence="1">16S rRNA m7G methyltransferase</shortName>
    </alternativeName>
</protein>
<feature type="chain" id="PRO_1000075233" description="Ribosomal RNA small subunit methyltransferase G">
    <location>
        <begin position="1"/>
        <end position="207"/>
    </location>
</feature>
<feature type="binding site" evidence="1">
    <location>
        <position position="74"/>
    </location>
    <ligand>
        <name>S-adenosyl-L-methionine</name>
        <dbReference type="ChEBI" id="CHEBI:59789"/>
    </ligand>
</feature>
<feature type="binding site" evidence="1">
    <location>
        <position position="79"/>
    </location>
    <ligand>
        <name>S-adenosyl-L-methionine</name>
        <dbReference type="ChEBI" id="CHEBI:59789"/>
    </ligand>
</feature>
<feature type="binding site" evidence="1">
    <location>
        <begin position="125"/>
        <end position="126"/>
    </location>
    <ligand>
        <name>S-adenosyl-L-methionine</name>
        <dbReference type="ChEBI" id="CHEBI:59789"/>
    </ligand>
</feature>
<feature type="binding site" evidence="1">
    <location>
        <position position="140"/>
    </location>
    <ligand>
        <name>S-adenosyl-L-methionine</name>
        <dbReference type="ChEBI" id="CHEBI:59789"/>
    </ligand>
</feature>